<dbReference type="EMBL" id="CP000803">
    <property type="protein sequence ID" value="ABU62315.1"/>
    <property type="molecule type" value="Genomic_DNA"/>
</dbReference>
<dbReference type="RefSeq" id="WP_003017214.1">
    <property type="nucleotide sequence ID" value="NC_009749.1"/>
</dbReference>
<dbReference type="SMR" id="A7NEB2"/>
<dbReference type="KEGG" id="fta:FTA_1840"/>
<dbReference type="HOGENOM" id="CLU_077636_1_0_6"/>
<dbReference type="GO" id="GO:0005737">
    <property type="term" value="C:cytoplasm"/>
    <property type="evidence" value="ECO:0007669"/>
    <property type="project" value="UniProtKB-SubCell"/>
</dbReference>
<dbReference type="GO" id="GO:0005840">
    <property type="term" value="C:ribosome"/>
    <property type="evidence" value="ECO:0007669"/>
    <property type="project" value="InterPro"/>
</dbReference>
<dbReference type="GO" id="GO:0043022">
    <property type="term" value="F:ribosome binding"/>
    <property type="evidence" value="ECO:0007669"/>
    <property type="project" value="InterPro"/>
</dbReference>
<dbReference type="GO" id="GO:0042274">
    <property type="term" value="P:ribosomal small subunit biogenesis"/>
    <property type="evidence" value="ECO:0007669"/>
    <property type="project" value="UniProtKB-UniRule"/>
</dbReference>
<dbReference type="GO" id="GO:0006364">
    <property type="term" value="P:rRNA processing"/>
    <property type="evidence" value="ECO:0007669"/>
    <property type="project" value="UniProtKB-UniRule"/>
</dbReference>
<dbReference type="Gene3D" id="2.30.30.240">
    <property type="entry name" value="PRC-barrel domain"/>
    <property type="match status" value="1"/>
</dbReference>
<dbReference type="Gene3D" id="2.40.30.60">
    <property type="entry name" value="RimM"/>
    <property type="match status" value="1"/>
</dbReference>
<dbReference type="HAMAP" id="MF_00014">
    <property type="entry name" value="Ribosome_mat_RimM"/>
    <property type="match status" value="1"/>
</dbReference>
<dbReference type="InterPro" id="IPR011033">
    <property type="entry name" value="PRC_barrel-like_sf"/>
</dbReference>
<dbReference type="InterPro" id="IPR056792">
    <property type="entry name" value="PRC_RimM"/>
</dbReference>
<dbReference type="InterPro" id="IPR011961">
    <property type="entry name" value="RimM"/>
</dbReference>
<dbReference type="InterPro" id="IPR002676">
    <property type="entry name" value="RimM_N"/>
</dbReference>
<dbReference type="InterPro" id="IPR036976">
    <property type="entry name" value="RimM_N_sf"/>
</dbReference>
<dbReference type="InterPro" id="IPR009000">
    <property type="entry name" value="Transl_B-barrel_sf"/>
</dbReference>
<dbReference type="NCBIfam" id="TIGR02273">
    <property type="entry name" value="16S_RimM"/>
    <property type="match status" value="1"/>
</dbReference>
<dbReference type="NCBIfam" id="NF011185">
    <property type="entry name" value="PRK14591.1"/>
    <property type="match status" value="1"/>
</dbReference>
<dbReference type="PANTHER" id="PTHR33692">
    <property type="entry name" value="RIBOSOME MATURATION FACTOR RIMM"/>
    <property type="match status" value="1"/>
</dbReference>
<dbReference type="PANTHER" id="PTHR33692:SF1">
    <property type="entry name" value="RIBOSOME MATURATION FACTOR RIMM"/>
    <property type="match status" value="1"/>
</dbReference>
<dbReference type="Pfam" id="PF24986">
    <property type="entry name" value="PRC_RimM"/>
    <property type="match status" value="1"/>
</dbReference>
<dbReference type="Pfam" id="PF01782">
    <property type="entry name" value="RimM"/>
    <property type="match status" value="1"/>
</dbReference>
<dbReference type="SUPFAM" id="SSF50346">
    <property type="entry name" value="PRC-barrel domain"/>
    <property type="match status" value="1"/>
</dbReference>
<dbReference type="SUPFAM" id="SSF50447">
    <property type="entry name" value="Translation proteins"/>
    <property type="match status" value="1"/>
</dbReference>
<keyword id="KW-0143">Chaperone</keyword>
<keyword id="KW-0963">Cytoplasm</keyword>
<keyword id="KW-0690">Ribosome biogenesis</keyword>
<keyword id="KW-0698">rRNA processing</keyword>
<feature type="chain" id="PRO_1000001173" description="Ribosome maturation factor RimM">
    <location>
        <begin position="1"/>
        <end position="169"/>
    </location>
</feature>
<feature type="domain" description="PRC barrel" evidence="1">
    <location>
        <begin position="97"/>
        <end position="169"/>
    </location>
</feature>
<gene>
    <name evidence="1" type="primary">rimM</name>
    <name type="ordered locus">FTA_1840</name>
</gene>
<proteinExistence type="inferred from homology"/>
<organism>
    <name type="scientific">Francisella tularensis subsp. holarctica (strain FTNF002-00 / FTA)</name>
    <dbReference type="NCBI Taxonomy" id="458234"/>
    <lineage>
        <taxon>Bacteria</taxon>
        <taxon>Pseudomonadati</taxon>
        <taxon>Pseudomonadota</taxon>
        <taxon>Gammaproteobacteria</taxon>
        <taxon>Thiotrichales</taxon>
        <taxon>Francisellaceae</taxon>
        <taxon>Francisella</taxon>
    </lineage>
</organism>
<protein>
    <recommendedName>
        <fullName evidence="1">Ribosome maturation factor RimM</fullName>
    </recommendedName>
</protein>
<sequence length="169" mass="19123">MSQDFVEIAKIGATYKLNGELNLYPLANSIETLLSYGDWYIQLPATNVWQQLKGESVLKRADKVYIKLANINNADTAKKYVNALIGVPKRALPQLAEDEVYFKDLIGCSVKNINNDSFGVVVDIIETGANEVLVCKEDNSEYLIPYVKQYIVSEDLNSKKIVVDWEYDY</sequence>
<accession>A7NEB2</accession>
<reference key="1">
    <citation type="journal article" date="2009" name="PLoS ONE">
        <title>Complete genome sequence of Francisella tularensis subspecies holarctica FTNF002-00.</title>
        <authorList>
            <person name="Barabote R.D."/>
            <person name="Xie G."/>
            <person name="Brettin T.S."/>
            <person name="Hinrichs S.H."/>
            <person name="Fey P.D."/>
            <person name="Jay J.J."/>
            <person name="Engle J.L."/>
            <person name="Godbole S.D."/>
            <person name="Noronha J.M."/>
            <person name="Scheuermann R.H."/>
            <person name="Zhou L.W."/>
            <person name="Lion C."/>
            <person name="Dempsey M.P."/>
        </authorList>
    </citation>
    <scope>NUCLEOTIDE SEQUENCE [LARGE SCALE GENOMIC DNA]</scope>
    <source>
        <strain>FTNF002-00 / FTA</strain>
    </source>
</reference>
<comment type="function">
    <text evidence="1">An accessory protein needed during the final step in the assembly of 30S ribosomal subunit, possibly for assembly of the head region. Essential for efficient processing of 16S rRNA. May be needed both before and after RbfA during the maturation of 16S rRNA. It has affinity for free ribosomal 30S subunits but not for 70S ribosomes.</text>
</comment>
<comment type="subunit">
    <text evidence="1">Binds ribosomal protein uS19.</text>
</comment>
<comment type="subcellular location">
    <subcellularLocation>
        <location evidence="1">Cytoplasm</location>
    </subcellularLocation>
</comment>
<comment type="domain">
    <text evidence="1">The PRC barrel domain binds ribosomal protein uS19.</text>
</comment>
<comment type="similarity">
    <text evidence="1">Belongs to the RimM family.</text>
</comment>
<name>RIMM_FRATF</name>
<evidence type="ECO:0000255" key="1">
    <source>
        <dbReference type="HAMAP-Rule" id="MF_00014"/>
    </source>
</evidence>